<reference key="1">
    <citation type="submission" date="2008-10" db="EMBL/GenBank/DDBJ databases">
        <title>Complete sequence of Desulfovibrio vulgaris str. 'Miyazaki F'.</title>
        <authorList>
            <person name="Lucas S."/>
            <person name="Copeland A."/>
            <person name="Lapidus A."/>
            <person name="Glavina del Rio T."/>
            <person name="Dalin E."/>
            <person name="Tice H."/>
            <person name="Bruce D."/>
            <person name="Goodwin L."/>
            <person name="Pitluck S."/>
            <person name="Sims D."/>
            <person name="Brettin T."/>
            <person name="Detter J.C."/>
            <person name="Han C."/>
            <person name="Larimer F."/>
            <person name="Land M."/>
            <person name="Hauser L."/>
            <person name="Kyrpides N."/>
            <person name="Mikhailova N."/>
            <person name="Hazen T.C."/>
            <person name="Richardson P."/>
        </authorList>
    </citation>
    <scope>NUCLEOTIDE SEQUENCE [LARGE SCALE GENOMIC DNA]</scope>
    <source>
        <strain>DSM 19637 / Miyazaki F</strain>
    </source>
</reference>
<organism>
    <name type="scientific">Nitratidesulfovibrio vulgaris (strain DSM 19637 / Miyazaki F)</name>
    <name type="common">Desulfovibrio vulgaris</name>
    <dbReference type="NCBI Taxonomy" id="883"/>
    <lineage>
        <taxon>Bacteria</taxon>
        <taxon>Pseudomonadati</taxon>
        <taxon>Thermodesulfobacteriota</taxon>
        <taxon>Desulfovibrionia</taxon>
        <taxon>Desulfovibrionales</taxon>
        <taxon>Desulfovibrionaceae</taxon>
        <taxon>Nitratidesulfovibrio</taxon>
    </lineage>
</organism>
<name>RS21_NITV9</name>
<evidence type="ECO:0000255" key="1">
    <source>
        <dbReference type="HAMAP-Rule" id="MF_00358"/>
    </source>
</evidence>
<evidence type="ECO:0000305" key="2"/>
<comment type="similarity">
    <text evidence="1">Belongs to the bacterial ribosomal protein bS21 family.</text>
</comment>
<gene>
    <name evidence="1" type="primary">rpsU</name>
    <name type="ordered locus">DvMF_0498</name>
</gene>
<keyword id="KW-0687">Ribonucleoprotein</keyword>
<keyword id="KW-0689">Ribosomal protein</keyword>
<proteinExistence type="inferred from homology"/>
<protein>
    <recommendedName>
        <fullName evidence="1">Small ribosomal subunit protein bS21</fullName>
    </recommendedName>
    <alternativeName>
        <fullName evidence="2">30S ribosomal protein S21</fullName>
    </alternativeName>
</protein>
<feature type="chain" id="PRO_1000120609" description="Small ribosomal subunit protein bS21">
    <location>
        <begin position="1"/>
        <end position="67"/>
    </location>
</feature>
<accession>B8DKM6</accession>
<sequence>MPGVYLNDDEYNFDIALRRFKKQVEKAGVLSEMKKRQHYEKPSVMRKKKKAAARKRLLKKIRKMNMA</sequence>
<dbReference type="EMBL" id="CP001197">
    <property type="protein sequence ID" value="ACL07455.1"/>
    <property type="molecule type" value="Genomic_DNA"/>
</dbReference>
<dbReference type="SMR" id="B8DKM6"/>
<dbReference type="STRING" id="883.DvMF_0498"/>
<dbReference type="KEGG" id="dvm:DvMF_0498"/>
<dbReference type="eggNOG" id="COG0828">
    <property type="taxonomic scope" value="Bacteria"/>
</dbReference>
<dbReference type="HOGENOM" id="CLU_159258_1_2_7"/>
<dbReference type="OrthoDB" id="9799244at2"/>
<dbReference type="GO" id="GO:1990904">
    <property type="term" value="C:ribonucleoprotein complex"/>
    <property type="evidence" value="ECO:0007669"/>
    <property type="project" value="UniProtKB-KW"/>
</dbReference>
<dbReference type="GO" id="GO:0005840">
    <property type="term" value="C:ribosome"/>
    <property type="evidence" value="ECO:0007669"/>
    <property type="project" value="UniProtKB-KW"/>
</dbReference>
<dbReference type="GO" id="GO:0003735">
    <property type="term" value="F:structural constituent of ribosome"/>
    <property type="evidence" value="ECO:0007669"/>
    <property type="project" value="InterPro"/>
</dbReference>
<dbReference type="GO" id="GO:0006412">
    <property type="term" value="P:translation"/>
    <property type="evidence" value="ECO:0007669"/>
    <property type="project" value="UniProtKB-UniRule"/>
</dbReference>
<dbReference type="Gene3D" id="1.20.5.1150">
    <property type="entry name" value="Ribosomal protein S8"/>
    <property type="match status" value="1"/>
</dbReference>
<dbReference type="HAMAP" id="MF_00358">
    <property type="entry name" value="Ribosomal_bS21"/>
    <property type="match status" value="1"/>
</dbReference>
<dbReference type="InterPro" id="IPR001911">
    <property type="entry name" value="Ribosomal_bS21"/>
</dbReference>
<dbReference type="InterPro" id="IPR018278">
    <property type="entry name" value="Ribosomal_bS21_CS"/>
</dbReference>
<dbReference type="InterPro" id="IPR038380">
    <property type="entry name" value="Ribosomal_bS21_sf"/>
</dbReference>
<dbReference type="NCBIfam" id="TIGR00030">
    <property type="entry name" value="S21p"/>
    <property type="match status" value="1"/>
</dbReference>
<dbReference type="PANTHER" id="PTHR21109">
    <property type="entry name" value="MITOCHONDRIAL 28S RIBOSOMAL PROTEIN S21"/>
    <property type="match status" value="1"/>
</dbReference>
<dbReference type="PANTHER" id="PTHR21109:SF22">
    <property type="entry name" value="SMALL RIBOSOMAL SUBUNIT PROTEIN BS21"/>
    <property type="match status" value="1"/>
</dbReference>
<dbReference type="Pfam" id="PF01165">
    <property type="entry name" value="Ribosomal_S21"/>
    <property type="match status" value="1"/>
</dbReference>
<dbReference type="PRINTS" id="PR00976">
    <property type="entry name" value="RIBOSOMALS21"/>
</dbReference>
<dbReference type="PROSITE" id="PS01181">
    <property type="entry name" value="RIBOSOMAL_S21"/>
    <property type="match status" value="1"/>
</dbReference>